<organism>
    <name type="scientific">Thermoanaerobacter sp. (strain X514)</name>
    <dbReference type="NCBI Taxonomy" id="399726"/>
    <lineage>
        <taxon>Bacteria</taxon>
        <taxon>Bacillati</taxon>
        <taxon>Bacillota</taxon>
        <taxon>Clostridia</taxon>
        <taxon>Thermoanaerobacterales</taxon>
        <taxon>Thermoanaerobacteraceae</taxon>
        <taxon>Thermoanaerobacter</taxon>
    </lineage>
</organism>
<sequence length="423" mass="47081">MFIDTARIYIKAGDGGNGIISFRREKYVAYGGPDGGDGGKGGDVIFIADPNLSTLLDFKYRKKYIAQNGENGRGKNQYGKNGEDLYIKVPVGTLIINDETGEIIADLVKPNQKAIVLRGGKGGRGNAKFATPTLKTPRFAESGEKGKEMWVRLELKLLADVGLIGFPNAGKSTLLASCTRAKPKIANYPFTTLTPNLGVVEHKGKSFVMADIPGLIEGAHRGEGLGHDFLRHIERTKMLIHVVDVSASEGRDPIEDFEKINEELKLYSERLLTLSQIVAANKIDIQSGKENFPAFEKEIKKRGYEVYPISALTKVGIDKLLDKTIEILSSIPVEEIKEVPEVIVYTPPEEEETLNIEVKDNTYYLSGTKIDKLLKRVNLQDEHSLRYFEMLLRKSGVIDALKEKGFKSGDTINVRDFEFEYYE</sequence>
<feature type="chain" id="PRO_0000386347" description="GTPase Obg">
    <location>
        <begin position="1"/>
        <end position="423"/>
    </location>
</feature>
<feature type="domain" description="Obg" evidence="3">
    <location>
        <begin position="1"/>
        <end position="158"/>
    </location>
</feature>
<feature type="domain" description="OBG-type G" evidence="1">
    <location>
        <begin position="159"/>
        <end position="329"/>
    </location>
</feature>
<feature type="domain" description="OCT" evidence="2">
    <location>
        <begin position="346"/>
        <end position="423"/>
    </location>
</feature>
<feature type="binding site" evidence="1">
    <location>
        <begin position="165"/>
        <end position="172"/>
    </location>
    <ligand>
        <name>GTP</name>
        <dbReference type="ChEBI" id="CHEBI:37565"/>
    </ligand>
</feature>
<feature type="binding site" evidence="1">
    <location>
        <position position="172"/>
    </location>
    <ligand>
        <name>Mg(2+)</name>
        <dbReference type="ChEBI" id="CHEBI:18420"/>
    </ligand>
</feature>
<feature type="binding site" evidence="1">
    <location>
        <begin position="190"/>
        <end position="194"/>
    </location>
    <ligand>
        <name>GTP</name>
        <dbReference type="ChEBI" id="CHEBI:37565"/>
    </ligand>
</feature>
<feature type="binding site" evidence="1">
    <location>
        <position position="192"/>
    </location>
    <ligand>
        <name>Mg(2+)</name>
        <dbReference type="ChEBI" id="CHEBI:18420"/>
    </ligand>
</feature>
<feature type="binding site" evidence="1">
    <location>
        <begin position="211"/>
        <end position="214"/>
    </location>
    <ligand>
        <name>GTP</name>
        <dbReference type="ChEBI" id="CHEBI:37565"/>
    </ligand>
</feature>
<feature type="binding site" evidence="1">
    <location>
        <begin position="281"/>
        <end position="284"/>
    </location>
    <ligand>
        <name>GTP</name>
        <dbReference type="ChEBI" id="CHEBI:37565"/>
    </ligand>
</feature>
<feature type="binding site" evidence="1">
    <location>
        <begin position="310"/>
        <end position="312"/>
    </location>
    <ligand>
        <name>GTP</name>
        <dbReference type="ChEBI" id="CHEBI:37565"/>
    </ligand>
</feature>
<gene>
    <name evidence="1" type="primary">obg</name>
    <name type="ordered locus">Teth514_2113</name>
</gene>
<keyword id="KW-0963">Cytoplasm</keyword>
<keyword id="KW-0342">GTP-binding</keyword>
<keyword id="KW-0378">Hydrolase</keyword>
<keyword id="KW-0460">Magnesium</keyword>
<keyword id="KW-0479">Metal-binding</keyword>
<keyword id="KW-0547">Nucleotide-binding</keyword>
<reference key="1">
    <citation type="submission" date="2008-01" db="EMBL/GenBank/DDBJ databases">
        <title>Complete sequence of Thermoanaerobacter sp. X514.</title>
        <authorList>
            <consortium name="US DOE Joint Genome Institute"/>
            <person name="Copeland A."/>
            <person name="Lucas S."/>
            <person name="Lapidus A."/>
            <person name="Barry K."/>
            <person name="Glavina del Rio T."/>
            <person name="Dalin E."/>
            <person name="Tice H."/>
            <person name="Pitluck S."/>
            <person name="Bruce D."/>
            <person name="Goodwin L."/>
            <person name="Saunders E."/>
            <person name="Brettin T."/>
            <person name="Detter J.C."/>
            <person name="Han C."/>
            <person name="Schmutz J."/>
            <person name="Larimer F."/>
            <person name="Land M."/>
            <person name="Hauser L."/>
            <person name="Kyrpides N."/>
            <person name="Kim E."/>
            <person name="Hemme C."/>
            <person name="Fields M.W."/>
            <person name="He Z."/>
            <person name="Zhou J."/>
            <person name="Richardson P."/>
        </authorList>
    </citation>
    <scope>NUCLEOTIDE SEQUENCE [LARGE SCALE GENOMIC DNA]</scope>
    <source>
        <strain>X514</strain>
    </source>
</reference>
<name>OBG_THEPX</name>
<protein>
    <recommendedName>
        <fullName evidence="1">GTPase Obg</fullName>
        <ecNumber evidence="1">3.6.5.-</ecNumber>
    </recommendedName>
    <alternativeName>
        <fullName evidence="1">GTP-binding protein Obg</fullName>
    </alternativeName>
</protein>
<accession>B0K414</accession>
<proteinExistence type="inferred from homology"/>
<dbReference type="EC" id="3.6.5.-" evidence="1"/>
<dbReference type="EMBL" id="CP000923">
    <property type="protein sequence ID" value="ABY93385.1"/>
    <property type="molecule type" value="Genomic_DNA"/>
</dbReference>
<dbReference type="SMR" id="B0K414"/>
<dbReference type="KEGG" id="tex:Teth514_2113"/>
<dbReference type="HOGENOM" id="CLU_011747_2_1_9"/>
<dbReference type="Proteomes" id="UP000002155">
    <property type="component" value="Chromosome"/>
</dbReference>
<dbReference type="GO" id="GO:0005737">
    <property type="term" value="C:cytoplasm"/>
    <property type="evidence" value="ECO:0007669"/>
    <property type="project" value="UniProtKB-SubCell"/>
</dbReference>
<dbReference type="GO" id="GO:0005525">
    <property type="term" value="F:GTP binding"/>
    <property type="evidence" value="ECO:0007669"/>
    <property type="project" value="UniProtKB-UniRule"/>
</dbReference>
<dbReference type="GO" id="GO:0003924">
    <property type="term" value="F:GTPase activity"/>
    <property type="evidence" value="ECO:0007669"/>
    <property type="project" value="UniProtKB-UniRule"/>
</dbReference>
<dbReference type="GO" id="GO:0000287">
    <property type="term" value="F:magnesium ion binding"/>
    <property type="evidence" value="ECO:0007669"/>
    <property type="project" value="InterPro"/>
</dbReference>
<dbReference type="GO" id="GO:0042254">
    <property type="term" value="P:ribosome biogenesis"/>
    <property type="evidence" value="ECO:0007669"/>
    <property type="project" value="UniProtKB-UniRule"/>
</dbReference>
<dbReference type="CDD" id="cd01898">
    <property type="entry name" value="Obg"/>
    <property type="match status" value="1"/>
</dbReference>
<dbReference type="FunFam" id="2.70.210.12:FF:000001">
    <property type="entry name" value="GTPase Obg"/>
    <property type="match status" value="1"/>
</dbReference>
<dbReference type="Gene3D" id="3.30.300.350">
    <property type="entry name" value="GTP-binding protein OBG, C-terminal domain"/>
    <property type="match status" value="1"/>
</dbReference>
<dbReference type="Gene3D" id="2.70.210.12">
    <property type="entry name" value="GTP1/OBG domain"/>
    <property type="match status" value="1"/>
</dbReference>
<dbReference type="Gene3D" id="3.40.50.300">
    <property type="entry name" value="P-loop containing nucleotide triphosphate hydrolases"/>
    <property type="match status" value="1"/>
</dbReference>
<dbReference type="HAMAP" id="MF_01454">
    <property type="entry name" value="GTPase_Obg"/>
    <property type="match status" value="1"/>
</dbReference>
<dbReference type="InterPro" id="IPR031167">
    <property type="entry name" value="G_OBG"/>
</dbReference>
<dbReference type="InterPro" id="IPR006073">
    <property type="entry name" value="GTP-bd"/>
</dbReference>
<dbReference type="InterPro" id="IPR014100">
    <property type="entry name" value="GTP-bd_Obg/CgtA"/>
</dbReference>
<dbReference type="InterPro" id="IPR036346">
    <property type="entry name" value="GTP-bd_prot_GTP1/OBG_C_sf"/>
</dbReference>
<dbReference type="InterPro" id="IPR006074">
    <property type="entry name" value="GTP1-OBG_CS"/>
</dbReference>
<dbReference type="InterPro" id="IPR006169">
    <property type="entry name" value="GTP1_OBG_dom"/>
</dbReference>
<dbReference type="InterPro" id="IPR036726">
    <property type="entry name" value="GTP1_OBG_dom_sf"/>
</dbReference>
<dbReference type="InterPro" id="IPR045086">
    <property type="entry name" value="OBG_GTPase"/>
</dbReference>
<dbReference type="InterPro" id="IPR015349">
    <property type="entry name" value="OCT_dom"/>
</dbReference>
<dbReference type="InterPro" id="IPR027417">
    <property type="entry name" value="P-loop_NTPase"/>
</dbReference>
<dbReference type="InterPro" id="IPR005225">
    <property type="entry name" value="Small_GTP-bd"/>
</dbReference>
<dbReference type="NCBIfam" id="TIGR02729">
    <property type="entry name" value="Obg_CgtA"/>
    <property type="match status" value="1"/>
</dbReference>
<dbReference type="NCBIfam" id="TIGR03595">
    <property type="entry name" value="Obg_CgtA_exten"/>
    <property type="match status" value="1"/>
</dbReference>
<dbReference type="NCBIfam" id="NF008954">
    <property type="entry name" value="PRK12296.1"/>
    <property type="match status" value="1"/>
</dbReference>
<dbReference type="NCBIfam" id="NF008955">
    <property type="entry name" value="PRK12297.1"/>
    <property type="match status" value="1"/>
</dbReference>
<dbReference type="NCBIfam" id="NF008956">
    <property type="entry name" value="PRK12299.1"/>
    <property type="match status" value="1"/>
</dbReference>
<dbReference type="NCBIfam" id="TIGR00231">
    <property type="entry name" value="small_GTP"/>
    <property type="match status" value="1"/>
</dbReference>
<dbReference type="PANTHER" id="PTHR11702">
    <property type="entry name" value="DEVELOPMENTALLY REGULATED GTP-BINDING PROTEIN-RELATED"/>
    <property type="match status" value="1"/>
</dbReference>
<dbReference type="PANTHER" id="PTHR11702:SF31">
    <property type="entry name" value="MITOCHONDRIAL RIBOSOME-ASSOCIATED GTPASE 2"/>
    <property type="match status" value="1"/>
</dbReference>
<dbReference type="Pfam" id="PF09269">
    <property type="entry name" value="DUF1967"/>
    <property type="match status" value="1"/>
</dbReference>
<dbReference type="Pfam" id="PF01018">
    <property type="entry name" value="GTP1_OBG"/>
    <property type="match status" value="1"/>
</dbReference>
<dbReference type="Pfam" id="PF01926">
    <property type="entry name" value="MMR_HSR1"/>
    <property type="match status" value="1"/>
</dbReference>
<dbReference type="PIRSF" id="PIRSF002401">
    <property type="entry name" value="GTP_bd_Obg/CgtA"/>
    <property type="match status" value="1"/>
</dbReference>
<dbReference type="PRINTS" id="PR00326">
    <property type="entry name" value="GTP1OBG"/>
</dbReference>
<dbReference type="SUPFAM" id="SSF102741">
    <property type="entry name" value="Obg GTP-binding protein C-terminal domain"/>
    <property type="match status" value="1"/>
</dbReference>
<dbReference type="SUPFAM" id="SSF82051">
    <property type="entry name" value="Obg GTP-binding protein N-terminal domain"/>
    <property type="match status" value="1"/>
</dbReference>
<dbReference type="SUPFAM" id="SSF52540">
    <property type="entry name" value="P-loop containing nucleoside triphosphate hydrolases"/>
    <property type="match status" value="1"/>
</dbReference>
<dbReference type="PROSITE" id="PS51710">
    <property type="entry name" value="G_OBG"/>
    <property type="match status" value="1"/>
</dbReference>
<dbReference type="PROSITE" id="PS00905">
    <property type="entry name" value="GTP1_OBG"/>
    <property type="match status" value="1"/>
</dbReference>
<dbReference type="PROSITE" id="PS51883">
    <property type="entry name" value="OBG"/>
    <property type="match status" value="1"/>
</dbReference>
<dbReference type="PROSITE" id="PS51881">
    <property type="entry name" value="OCT"/>
    <property type="match status" value="1"/>
</dbReference>
<evidence type="ECO:0000255" key="1">
    <source>
        <dbReference type="HAMAP-Rule" id="MF_01454"/>
    </source>
</evidence>
<evidence type="ECO:0000255" key="2">
    <source>
        <dbReference type="PROSITE-ProRule" id="PRU01229"/>
    </source>
</evidence>
<evidence type="ECO:0000255" key="3">
    <source>
        <dbReference type="PROSITE-ProRule" id="PRU01231"/>
    </source>
</evidence>
<comment type="function">
    <text evidence="1">An essential GTPase which binds GTP, GDP and possibly (p)ppGpp with moderate affinity, with high nucleotide exchange rates and a fairly low GTP hydrolysis rate. Plays a role in control of the cell cycle, stress response, ribosome biogenesis and in those bacteria that undergo differentiation, in morphogenesis control.</text>
</comment>
<comment type="cofactor">
    <cofactor evidence="1">
        <name>Mg(2+)</name>
        <dbReference type="ChEBI" id="CHEBI:18420"/>
    </cofactor>
</comment>
<comment type="subunit">
    <text evidence="1">Monomer.</text>
</comment>
<comment type="subcellular location">
    <subcellularLocation>
        <location evidence="1">Cytoplasm</location>
    </subcellularLocation>
</comment>
<comment type="similarity">
    <text evidence="1">Belongs to the TRAFAC class OBG-HflX-like GTPase superfamily. OBG GTPase family.</text>
</comment>